<reference key="1">
    <citation type="journal article" date="2009" name="J. Bacteriol.">
        <title>The complete genome sequence of Helicobacter pylori strain G27.</title>
        <authorList>
            <person name="Baltrus D.A."/>
            <person name="Amieva M.R."/>
            <person name="Covacci A."/>
            <person name="Lowe T.M."/>
            <person name="Merrell D.S."/>
            <person name="Ottemann K.M."/>
            <person name="Stein M."/>
            <person name="Salama N.R."/>
            <person name="Guillemin K."/>
        </authorList>
    </citation>
    <scope>NUCLEOTIDE SEQUENCE [LARGE SCALE GENOMIC DNA]</scope>
    <source>
        <strain>G27</strain>
    </source>
</reference>
<feature type="chain" id="PRO_0000368521" description="ATP synthase subunit b">
    <location>
        <begin position="1"/>
        <end position="171"/>
    </location>
</feature>
<feature type="transmembrane region" description="Helical" evidence="1">
    <location>
        <begin position="2"/>
        <end position="22"/>
    </location>
</feature>
<keyword id="KW-0066">ATP synthesis</keyword>
<keyword id="KW-0997">Cell inner membrane</keyword>
<keyword id="KW-1003">Cell membrane</keyword>
<keyword id="KW-0138">CF(0)</keyword>
<keyword id="KW-0375">Hydrogen ion transport</keyword>
<keyword id="KW-0406">Ion transport</keyword>
<keyword id="KW-0472">Membrane</keyword>
<keyword id="KW-1185">Reference proteome</keyword>
<keyword id="KW-0812">Transmembrane</keyword>
<keyword id="KW-1133">Transmembrane helix</keyword>
<keyword id="KW-0813">Transport</keyword>
<comment type="function">
    <text evidence="1">F(1)F(0) ATP synthase produces ATP from ADP in the presence of a proton or sodium gradient. F-type ATPases consist of two structural domains, F(1) containing the extramembraneous catalytic core and F(0) containing the membrane proton channel, linked together by a central stalk and a peripheral stalk. During catalysis, ATP synthesis in the catalytic domain of F(1) is coupled via a rotary mechanism of the central stalk subunits to proton translocation.</text>
</comment>
<comment type="function">
    <text evidence="1">Component of the F(0) channel, it forms part of the peripheral stalk, linking F(1) to F(0).</text>
</comment>
<comment type="subunit">
    <text evidence="1">F-type ATPases have 2 components, F(1) - the catalytic core - and F(0) - the membrane proton channel. F(1) has five subunits: alpha(3), beta(3), gamma(1), delta(1), epsilon(1). F(0) has three main subunits: a(1), b(2) and c(10-14). The alpha and beta chains form an alternating ring which encloses part of the gamma chain. F(1) is attached to F(0) by a central stalk formed by the gamma and epsilon chains, while a peripheral stalk is formed by the delta and b chains.</text>
</comment>
<comment type="subcellular location">
    <subcellularLocation>
        <location evidence="1">Cell inner membrane</location>
        <topology evidence="1">Single-pass membrane protein</topology>
    </subcellularLocation>
</comment>
<comment type="similarity">
    <text evidence="1">Belongs to the ATPase B chain family.</text>
</comment>
<accession>B5Z8D4</accession>
<sequence length="171" mass="19825">MFVVKMVLGFLILLSPLCATGLDISQTDIIERSLNFLLFAGILWYFLAKKLRSFLRSKSLEISKRLEEIQAQLKVSKENKKKLLKELEQAKEKAELIISDANKEAYTITQKYELQTKIDVENLIKNSKALMDLEVKKIKRELVESVFKDLRESKKVSFNAQDCVNILKQRL</sequence>
<dbReference type="EMBL" id="CP001173">
    <property type="protein sequence ID" value="ACI27833.1"/>
    <property type="molecule type" value="Genomic_DNA"/>
</dbReference>
<dbReference type="RefSeq" id="WP_000498431.1">
    <property type="nucleotide sequence ID" value="NC_011333.1"/>
</dbReference>
<dbReference type="SMR" id="B5Z8D4"/>
<dbReference type="KEGG" id="hpg:HPG27_1081"/>
<dbReference type="HOGENOM" id="CLU_129781_1_0_7"/>
<dbReference type="Proteomes" id="UP000001735">
    <property type="component" value="Chromosome"/>
</dbReference>
<dbReference type="GO" id="GO:0005886">
    <property type="term" value="C:plasma membrane"/>
    <property type="evidence" value="ECO:0007669"/>
    <property type="project" value="UniProtKB-SubCell"/>
</dbReference>
<dbReference type="GO" id="GO:0045259">
    <property type="term" value="C:proton-transporting ATP synthase complex"/>
    <property type="evidence" value="ECO:0007669"/>
    <property type="project" value="UniProtKB-KW"/>
</dbReference>
<dbReference type="GO" id="GO:0046933">
    <property type="term" value="F:proton-transporting ATP synthase activity, rotational mechanism"/>
    <property type="evidence" value="ECO:0007669"/>
    <property type="project" value="UniProtKB-UniRule"/>
</dbReference>
<dbReference type="CDD" id="cd06503">
    <property type="entry name" value="ATP-synt_Fo_b"/>
    <property type="match status" value="1"/>
</dbReference>
<dbReference type="Gene3D" id="1.20.5.620">
    <property type="entry name" value="F1F0 ATP synthase subunit B, membrane domain"/>
    <property type="match status" value="1"/>
</dbReference>
<dbReference type="HAMAP" id="MF_01398">
    <property type="entry name" value="ATP_synth_b_bprime"/>
    <property type="match status" value="1"/>
</dbReference>
<dbReference type="InterPro" id="IPR028987">
    <property type="entry name" value="ATP_synth_B-like_membr_sf"/>
</dbReference>
<dbReference type="InterPro" id="IPR002146">
    <property type="entry name" value="ATP_synth_b/b'su_bac/chlpt"/>
</dbReference>
<dbReference type="NCBIfam" id="NF006292">
    <property type="entry name" value="PRK08475.1"/>
    <property type="match status" value="1"/>
</dbReference>
<dbReference type="Pfam" id="PF00430">
    <property type="entry name" value="ATP-synt_B"/>
    <property type="match status" value="1"/>
</dbReference>
<dbReference type="SUPFAM" id="SSF81573">
    <property type="entry name" value="F1F0 ATP synthase subunit B, membrane domain"/>
    <property type="match status" value="1"/>
</dbReference>
<gene>
    <name evidence="1" type="primary">atpF</name>
    <name type="ordered locus">HPG27_1081</name>
</gene>
<name>ATPF_HELPG</name>
<organism>
    <name type="scientific">Helicobacter pylori (strain G27)</name>
    <dbReference type="NCBI Taxonomy" id="563041"/>
    <lineage>
        <taxon>Bacteria</taxon>
        <taxon>Pseudomonadati</taxon>
        <taxon>Campylobacterota</taxon>
        <taxon>Epsilonproteobacteria</taxon>
        <taxon>Campylobacterales</taxon>
        <taxon>Helicobacteraceae</taxon>
        <taxon>Helicobacter</taxon>
    </lineage>
</organism>
<proteinExistence type="inferred from homology"/>
<evidence type="ECO:0000255" key="1">
    <source>
        <dbReference type="HAMAP-Rule" id="MF_01398"/>
    </source>
</evidence>
<protein>
    <recommendedName>
        <fullName evidence="1">ATP synthase subunit b</fullName>
    </recommendedName>
    <alternativeName>
        <fullName evidence="1">ATP synthase F(0) sector subunit b</fullName>
    </alternativeName>
    <alternativeName>
        <fullName evidence="1">ATPase subunit I</fullName>
    </alternativeName>
    <alternativeName>
        <fullName evidence="1">F-type ATPase subunit b</fullName>
        <shortName evidence="1">F-ATPase subunit b</shortName>
    </alternativeName>
</protein>